<gene>
    <name evidence="3" type="primary">nanB</name>
    <name type="ORF">FE257_001449</name>
</gene>
<proteinExistence type="evidence at protein level"/>
<sequence length="417" mass="47228">MRPSTTTLSLLVFLISSILLATTGKNSIIRYTYFPILLIICHLQLTNPPVNTASNIFDGSFEGTTLLNGLQQLNILVLTGVDVNDESGSSVFRRLKSALIYPFNARGVGTKYQIKNLPVLSSFICKEKQGESGLSSFLSSARYRFAIRQLAVSAWQYLLADIGFSLLKNIPTEKRLEYYGPEEEWMPQSLDQLRVRIEATLVFWVTLKAFAEIQSKIATALLTAVGVTSPHDWPPFFGSLREAYTLRGFWGKWWHQQLRWPLTSYSNFITRRVLKLTRSPLERYLNNALVFAQSGIVHVYFNWIKGVQDGDVGCMAFYISFVAGYFLEDHVQGLWRKAFDRTSAQESSLWLLERLVGALWVATFLTIVTPWWVYPFLRLSSSLKMPYSFVDVFGFQGALTVVFMGAAALRIGLNAEP</sequence>
<reference key="1">
    <citation type="journal article" date="2020" name="J. Am. Chem. Soc.">
        <title>Biosynthesis of a new benzazepine alkaloid nanangelenin A from Aspergillus nanangensis involves an unusual l-kynurenine-incorporating NRPS catalyzing regioselective lactamization.</title>
        <authorList>
            <person name="Li H."/>
            <person name="Gilchrist C.L.M."/>
            <person name="Phan C.S."/>
            <person name="Lacey H.J."/>
            <person name="Vuong D."/>
            <person name="Moggach S.A."/>
            <person name="Lacey E."/>
            <person name="Piggott A.M."/>
            <person name="Chooi Y.H."/>
        </authorList>
    </citation>
    <scope>NUCLEOTIDE SEQUENCE [GENOMIC DNA]</scope>
    <scope>FUNCTION</scope>
    <scope>CATALYTIC ACTIVITY</scope>
    <scope>PATHWAY</scope>
    <source>
        <strain>CBS 146238 / FRR 6048 / MST FP2251</strain>
    </source>
</reference>
<comment type="function">
    <text evidence="2">Acetyltransferase; part of the gene cluster that mediates the biosynthesis of the benzazepine alkaloid nanangelenin A which contains an unprecedented 3,4-dihydro-1-benzazepine-2,5-dione-N-prenyl-N-acetoxy-anthranilamide scaffold (PubMed:32182055). The first step of nanangelenin biosynthesis is catalyzed by the indoleamine 2,3-dioxygenase nanC which produces N-formyl-kynurenine through the catabolism of tryptophan (PubMed:32182055). The two-module NRPS nanA then utilizes anthranilate (Ant) and L-kynurenine (L-Kyn) to assemble the dipeptide product nanangelenin B (PubMed:32182055). The first adenylation domain of nanA (A1) loads anthranilate onto the T1 domain, while A2 loads kynurenine, generated through spontaneous nonenzymatic deformylation of the nanC-supplied N-formyl-kynurenine (PubMed:32182055). The peptide bond formation between the tethered amino acids is catalyzed by the first condensation domain (C1) between anthranilate's carbonyl carbon and kynurenine's aliphatic primary amine (PubMed:32182055). The second C domain (C2) catalyzes the final cyclization event between the aromatic amine of kynurenine and the tethered carbonyl carbon, yielding nanangelenin B (PubMed:32182055). The terminal T3 domain enhances the catalytic efficiency of C2, suggesting the T2-tethered Ant-L-Kyn is transferred to T3 prior to cyclization by C2 (PubMed:32182055). Once released from nanA, nanangelenin B is then prenylated by the prenyltransferase nanD to form nanangelenin C (PubMed:32182055). Nanangelenin C is then N-hydroxylated by the FAD-dependent monooxygenase nanF and further acetylated by the acetyltransferase nanB to yield nanangelenin F (PubMed:32182055). Finally, the N-methyltransferase nanE methylates the amide nitrogen of 1-benzazepine to convert nanangelenin F into nanangelenin A (PubMed:32182055). NanE is also able to methylate most of the intermediates of the pathway such as nanangelenin B and nanangelenin C to produce nanangelenin D and nanangelenin E, respectively (PubMed:32182055).</text>
</comment>
<comment type="pathway">
    <text evidence="2">Secondary metabolite biosynthesis.</text>
</comment>
<comment type="subcellular location">
    <subcellularLocation>
        <location evidence="1">Membrane</location>
        <topology evidence="1">Multi-pass membrane protein</topology>
    </subcellularLocation>
</comment>
<comment type="similarity">
    <text evidence="4">Belongs to the wax synthase family.</text>
</comment>
<protein>
    <recommendedName>
        <fullName evidence="3">Acetyltransferase nanB</fullName>
        <ecNumber evidence="2">2.3.1.-</ecNumber>
    </recommendedName>
    <alternativeName>
        <fullName evidence="3">Nanangelenin A biosynthesis cluster protein B</fullName>
    </alternativeName>
</protein>
<accession>A0A6G9KH50</accession>
<dbReference type="EC" id="2.3.1.-" evidence="2"/>
<dbReference type="EMBL" id="MT024570">
    <property type="protein sequence ID" value="QIQ51362.1"/>
    <property type="molecule type" value="Genomic_DNA"/>
</dbReference>
<dbReference type="OrthoDB" id="1077582at2759"/>
<dbReference type="GO" id="GO:0016020">
    <property type="term" value="C:membrane"/>
    <property type="evidence" value="ECO:0007669"/>
    <property type="project" value="UniProtKB-SubCell"/>
</dbReference>
<dbReference type="GO" id="GO:0008374">
    <property type="term" value="F:O-acyltransferase activity"/>
    <property type="evidence" value="ECO:0007669"/>
    <property type="project" value="InterPro"/>
</dbReference>
<dbReference type="GO" id="GO:0006629">
    <property type="term" value="P:lipid metabolic process"/>
    <property type="evidence" value="ECO:0007669"/>
    <property type="project" value="InterPro"/>
</dbReference>
<dbReference type="InterPro" id="IPR044851">
    <property type="entry name" value="Wax_synthase"/>
</dbReference>
<dbReference type="InterPro" id="IPR032805">
    <property type="entry name" value="Wax_synthase_dom"/>
</dbReference>
<dbReference type="PANTHER" id="PTHR31595">
    <property type="entry name" value="LONG-CHAIN-ALCOHOL O-FATTY-ACYLTRANSFERASE 3-RELATED"/>
    <property type="match status" value="1"/>
</dbReference>
<dbReference type="PANTHER" id="PTHR31595:SF27">
    <property type="entry name" value="WAX SYNTHASE DOMAIN-CONTAINING PROTEIN-RELATED"/>
    <property type="match status" value="1"/>
</dbReference>
<dbReference type="Pfam" id="PF13813">
    <property type="entry name" value="MBOAT_2"/>
    <property type="match status" value="1"/>
</dbReference>
<keyword id="KW-0012">Acyltransferase</keyword>
<keyword id="KW-0472">Membrane</keyword>
<keyword id="KW-0732">Signal</keyword>
<keyword id="KW-0808">Transferase</keyword>
<keyword id="KW-0812">Transmembrane</keyword>
<keyword id="KW-1133">Transmembrane helix</keyword>
<organism>
    <name type="scientific">Aspergillus nanangensis</name>
    <dbReference type="NCBI Taxonomy" id="2582783"/>
    <lineage>
        <taxon>Eukaryota</taxon>
        <taxon>Fungi</taxon>
        <taxon>Dikarya</taxon>
        <taxon>Ascomycota</taxon>
        <taxon>Pezizomycotina</taxon>
        <taxon>Eurotiomycetes</taxon>
        <taxon>Eurotiomycetidae</taxon>
        <taxon>Eurotiales</taxon>
        <taxon>Aspergillaceae</taxon>
        <taxon>Aspergillus</taxon>
        <taxon>Aspergillus subgen. Circumdati</taxon>
    </lineage>
</organism>
<evidence type="ECO:0000255" key="1"/>
<evidence type="ECO:0000269" key="2">
    <source>
    </source>
</evidence>
<evidence type="ECO:0000303" key="3">
    <source>
    </source>
</evidence>
<evidence type="ECO:0000305" key="4"/>
<feature type="signal peptide" evidence="1">
    <location>
        <begin position="1"/>
        <end position="24"/>
    </location>
</feature>
<feature type="chain" id="PRO_5026038360" description="Acetyltransferase nanB" evidence="1">
    <location>
        <begin position="25"/>
        <end position="417"/>
    </location>
</feature>
<feature type="transmembrane region" description="Helical" evidence="1">
    <location>
        <begin position="150"/>
        <end position="170"/>
    </location>
</feature>
<feature type="transmembrane region" description="Helical" evidence="1">
    <location>
        <begin position="284"/>
        <end position="304"/>
    </location>
</feature>
<feature type="transmembrane region" description="Helical" evidence="1">
    <location>
        <begin position="307"/>
        <end position="327"/>
    </location>
</feature>
<feature type="transmembrane region" description="Helical" evidence="1">
    <location>
        <begin position="356"/>
        <end position="376"/>
    </location>
</feature>
<feature type="transmembrane region" description="Helical" evidence="1">
    <location>
        <begin position="389"/>
        <end position="409"/>
    </location>
</feature>
<name>NANB_ASPNN</name>